<protein>
    <recommendedName>
        <fullName evidence="9">Tabersonine 3-oxygenase</fullName>
        <shortName evidence="9">T3O</shortName>
        <ecNumber evidence="5">1.14.14.50</ecNumber>
    </recommendedName>
    <alternativeName>
        <fullName evidence="8">16-methoxytabersonine 3-oxygenase</fullName>
    </alternativeName>
    <alternativeName>
        <fullName evidence="8">Cytochrome P450 71D1</fullName>
    </alternativeName>
    <alternativeName>
        <fullName evidence="7">Cytochrome P450 71D1V2</fullName>
    </alternativeName>
</protein>
<evidence type="ECO:0000250" key="1">
    <source>
        <dbReference type="UniProtKB" id="Q96242"/>
    </source>
</evidence>
<evidence type="ECO:0000255" key="2"/>
<evidence type="ECO:0000269" key="3">
    <source>
    </source>
</evidence>
<evidence type="ECO:0000269" key="4">
    <source>
    </source>
</evidence>
<evidence type="ECO:0000269" key="5">
    <source>
    </source>
</evidence>
<evidence type="ECO:0000269" key="6">
    <source>
    </source>
</evidence>
<evidence type="ECO:0000303" key="7">
    <source>
    </source>
</evidence>
<evidence type="ECO:0000303" key="8">
    <source>
    </source>
</evidence>
<evidence type="ECO:0000303" key="9">
    <source>
    </source>
</evidence>
<evidence type="ECO:0000305" key="10"/>
<evidence type="ECO:0000312" key="11">
    <source>
        <dbReference type="EMBL" id="AEX07771.1"/>
    </source>
</evidence>
<sequence>MEFHESSPFVFITRGFIFIAISIAVLRRIISKKTKTLPPGPWKLPLIGNLHQFLGSVPYQILRDLAQKNGPLMHLQLGEVSAIVAASPQMAKEITKTLDLQFADRPVIQALRIVTYDYLDISFNAYGKYWRQLRKIFVQELLTSKRVRSFCSIREDEFSNLVKTINSANGKSINLSKLMTSCTNSIINKVAFGKVRYEREVFIDLINQILALAGGFKLVDLFPSYKILHVLEGTERKLWEIRGKIDKILDKVIDEHRENSSRTGKGNGCNGQEDIVDILLRIEEGGDLDLDIPFGNNNIKALLFDIIAGGTETSSTAVDWAMSEMMRNPHVMSKAQKEIREAFNGKEKIEENDIQNLKYLKLVIQETLRLHPPAPLLMRQCREKCEIGGYHIPVGTKAFINVWAIGRDPAYWPNPESFIPERFDDNTYEFTKSEHHAFEYLPFGAGRRMCPGISFGLANVELPLALLLYHFNWQLPDGSTTLDMTEATGLAARRKYDLQLIATSYA</sequence>
<reference key="1">
    <citation type="journal article" date="2012" name="Planta">
        <title>Molecular characterization of the pentacyclic triterpenoid biosynthetic pathway in Catharanthus roseus.</title>
        <authorList>
            <person name="Huang L."/>
            <person name="Li J."/>
            <person name="Ye H."/>
            <person name="Li C."/>
            <person name="Wang H."/>
            <person name="Liu B."/>
            <person name="Zhang Y."/>
        </authorList>
    </citation>
    <scope>NUCLEOTIDE SEQUENCE [MRNA]</scope>
    <scope>SUBSTRATE SPECIFICITY</scope>
</reference>
<reference key="2">
    <citation type="journal article" date="2015" name="Proc. Natl. Acad. Sci. U.S.A.">
        <title>Completion of the seven-step pathway from tabersonine to the anticancer drug precursor vindoline and its assembly in yeast.</title>
        <authorList>
            <person name="Qu Y."/>
            <person name="Easson M.L."/>
            <person name="Froese J."/>
            <person name="Simionescu R."/>
            <person name="Hudlicky T."/>
            <person name="De Luca V."/>
        </authorList>
    </citation>
    <scope>NUCLEOTIDE SEQUENCE [MRNA]</scope>
    <scope>FUNCTION</scope>
    <scope>CATALYTIC ACTIVITY</scope>
    <scope>TISSUE SPECIFICITY</scope>
    <scope>BIOPHYSICOCHEMICAL PROPERTIES</scope>
</reference>
<reference key="3">
    <citation type="journal article" date="2015" name="Chem. Commun. (Camb.)">
        <title>Discovery of a P450-catalyzed step in vindoline biosynthesis: a link between the aspidosperma and eburnamine alkaloids.</title>
        <authorList>
            <person name="Kellner F."/>
            <person name="Geu-Flores F."/>
            <person name="Sherden N.H."/>
            <person name="Brown S."/>
            <person name="Foureau E."/>
            <person name="Courdavault V."/>
            <person name="O'Connor S.E."/>
        </authorList>
    </citation>
    <scope>NUCLEOTIDE SEQUENCE [MRNA]</scope>
    <scope>FUNCTION</scope>
    <scope>SUBCELLULAR LOCATION</scope>
    <source>
        <strain>cv. Little Bright Eyes</strain>
    </source>
</reference>
<reference key="4">
    <citation type="journal article" date="2017" name="Sci. Rep.">
        <title>Folivory elicits a strong defense reaction in Catharanthus roseus: metabolomic and transcriptomic analyses reveal distinct local and systemic responses.</title>
        <authorList>
            <person name="Duge de Bernonville T."/>
            <person name="Carqueijeiro I."/>
            <person name="Lanoue A."/>
            <person name="Lafontaine F."/>
            <person name="Sanchez Bel P."/>
            <person name="Liesecke F."/>
            <person name="Musset K."/>
            <person name="Oudin A."/>
            <person name="Glevarec G."/>
            <person name="Pichon O."/>
            <person name="Besseau S."/>
            <person name="Clastre M."/>
            <person name="St-Pierre B."/>
            <person name="Flors V."/>
            <person name="Maury S."/>
            <person name="Huguet E."/>
            <person name="O'Connor S.E."/>
            <person name="Courdavault V."/>
        </authorList>
    </citation>
    <scope>INDUCTION BY HERBIVORY</scope>
</reference>
<feature type="chain" id="PRO_0000439949" description="Tabersonine 3-oxygenase">
    <location>
        <begin position="1"/>
        <end position="506"/>
    </location>
</feature>
<feature type="topological domain" description="Lumenal" evidence="10">
    <location>
        <begin position="1"/>
        <end position="5"/>
    </location>
</feature>
<feature type="transmembrane region" description="Helical" evidence="2">
    <location>
        <begin position="6"/>
        <end position="26"/>
    </location>
</feature>
<feature type="topological domain" description="Cytoplasmic" evidence="10">
    <location>
        <begin position="27"/>
        <end position="506"/>
    </location>
</feature>
<feature type="binding site" description="axial binding residue" evidence="1">
    <location>
        <position position="450"/>
    </location>
    <ligand>
        <name>heme</name>
        <dbReference type="ChEBI" id="CHEBI:30413"/>
    </ligand>
    <ligandPart>
        <name>Fe</name>
        <dbReference type="ChEBI" id="CHEBI:18248"/>
    </ligandPart>
</feature>
<keyword id="KW-0017">Alkaloid metabolism</keyword>
<keyword id="KW-0256">Endoplasmic reticulum</keyword>
<keyword id="KW-0349">Heme</keyword>
<keyword id="KW-0408">Iron</keyword>
<keyword id="KW-0472">Membrane</keyword>
<keyword id="KW-0479">Metal-binding</keyword>
<keyword id="KW-0503">Monooxygenase</keyword>
<keyword id="KW-0560">Oxidoreductase</keyword>
<keyword id="KW-0812">Transmembrane</keyword>
<keyword id="KW-1133">Transmembrane helix</keyword>
<name>T3O_CATRO</name>
<comment type="function">
    <text evidence="3 4 5">Cytochrome P450 catalyzing the monooxygenation of 16-methoxytabersonine, 16-hydroxytabersonine and tabersonine, but not of 2,3-dihydrotabersonine (PubMed:25918424). Converts the C2,C3 alkene of tabersonine and 16-methoxytabersonine to the epoxides, which then spontaneously open to form the corresponding imine alcohols (PubMed:25850027). Inactive in converting amyrin to ursolic acid (PubMed:22837051).</text>
</comment>
<comment type="catalytic activity">
    <reaction evidence="5">
        <text>16-methoxytabersonine + reduced [NADPH--hemoprotein reductase] + O2 = (3R)-1,2-didehydro-3-hydroxy-16-methoxy-2,3-dihydrotabersonine + oxidized [NADPH--hemoprotein reductase] + H2O + H(+)</text>
        <dbReference type="Rhea" id="RHEA:52480"/>
        <dbReference type="Rhea" id="RHEA-COMP:11964"/>
        <dbReference type="Rhea" id="RHEA-COMP:11965"/>
        <dbReference type="ChEBI" id="CHEBI:15377"/>
        <dbReference type="ChEBI" id="CHEBI:15378"/>
        <dbReference type="ChEBI" id="CHEBI:15379"/>
        <dbReference type="ChEBI" id="CHEBI:57618"/>
        <dbReference type="ChEBI" id="CHEBI:58210"/>
        <dbReference type="ChEBI" id="CHEBI:58930"/>
        <dbReference type="ChEBI" id="CHEBI:136640"/>
        <dbReference type="EC" id="1.14.14.50"/>
    </reaction>
</comment>
<comment type="catalytic activity">
    <reaction evidence="5">
        <text>(-)-tabersonine + reduced [NADPH--hemoprotein reductase] + O2 = (3R)-1,2-didehydro-3-hydroxy-2,3-dihydrotabersonine + oxidized [NADPH--hemoprotein reductase] + H2O + H(+)</text>
        <dbReference type="Rhea" id="RHEA:55024"/>
        <dbReference type="Rhea" id="RHEA-COMP:11964"/>
        <dbReference type="Rhea" id="RHEA-COMP:11965"/>
        <dbReference type="ChEBI" id="CHEBI:15377"/>
        <dbReference type="ChEBI" id="CHEBI:15378"/>
        <dbReference type="ChEBI" id="CHEBI:15379"/>
        <dbReference type="ChEBI" id="CHEBI:57618"/>
        <dbReference type="ChEBI" id="CHEBI:57893"/>
        <dbReference type="ChEBI" id="CHEBI:58210"/>
        <dbReference type="ChEBI" id="CHEBI:138462"/>
        <dbReference type="EC" id="1.14.14.50"/>
    </reaction>
</comment>
<comment type="cofactor">
    <cofactor evidence="1">
        <name>heme</name>
        <dbReference type="ChEBI" id="CHEBI:30413"/>
    </cofactor>
</comment>
<comment type="biophysicochemical properties">
    <kinetics>
        <KM evidence="5">3.1 uM for tabersonine</KM>
        <text evidence="5">The KM is measured in the presence of a saturating amount of tabersonine 3-reductase, the enzyme converting the unstable intermediate produced by the reaction.</text>
    </kinetics>
</comment>
<comment type="pathway">
    <text>Alkaloid biosynthesis; vindoline biosynthesis.</text>
</comment>
<comment type="subcellular location">
    <subcellularLocation>
        <location evidence="4">Endoplasmic reticulum membrane</location>
        <topology>Single-pass membrane protein</topology>
    </subcellularLocation>
</comment>
<comment type="tissue specificity">
    <text evidence="5">Expressed in leaf epidermis.</text>
</comment>
<comment type="induction">
    <text evidence="6">Up-regulated by herbivory.</text>
</comment>
<comment type="miscellaneous">
    <text evidence="4">The CYP71D1V2 product is either trapped by the reductase T3R to form vindorosine and vindoline precursors, or it spontaneously rearranges to form a member of the eburnamine class of monoterpene indole alkaloids.</text>
</comment>
<comment type="similarity">
    <text evidence="10">Belongs to the cytochrome P450 family.</text>
</comment>
<accession>I1TEM1</accession>
<dbReference type="EC" id="1.14.14.50" evidence="5"/>
<dbReference type="EMBL" id="JN613016">
    <property type="protein sequence ID" value="AEX07771.1"/>
    <property type="molecule type" value="mRNA"/>
</dbReference>
<dbReference type="EMBL" id="KP122967">
    <property type="protein sequence ID" value="AKM12282.1"/>
    <property type="molecule type" value="mRNA"/>
</dbReference>
<dbReference type="EMBL" id="LN831957">
    <property type="protein sequence ID" value="CQR79399.1"/>
    <property type="molecule type" value="mRNA"/>
</dbReference>
<dbReference type="SMR" id="I1TEM1"/>
<dbReference type="KEGG" id="ag:AKM12282"/>
<dbReference type="OrthoDB" id="2789670at2759"/>
<dbReference type="BioCyc" id="MetaCyc:MONOMER-20195"/>
<dbReference type="BRENDA" id="1.14.14.50">
    <property type="organism ID" value="1211"/>
</dbReference>
<dbReference type="SABIO-RK" id="I1TEM1"/>
<dbReference type="UniPathway" id="UPA00365"/>
<dbReference type="GO" id="GO:0005789">
    <property type="term" value="C:endoplasmic reticulum membrane"/>
    <property type="evidence" value="ECO:0007669"/>
    <property type="project" value="UniProtKB-SubCell"/>
</dbReference>
<dbReference type="GO" id="GO:0020037">
    <property type="term" value="F:heme binding"/>
    <property type="evidence" value="ECO:0007669"/>
    <property type="project" value="InterPro"/>
</dbReference>
<dbReference type="GO" id="GO:0005506">
    <property type="term" value="F:iron ion binding"/>
    <property type="evidence" value="ECO:0007669"/>
    <property type="project" value="InterPro"/>
</dbReference>
<dbReference type="GO" id="GO:0004497">
    <property type="term" value="F:monooxygenase activity"/>
    <property type="evidence" value="ECO:0007669"/>
    <property type="project" value="UniProtKB-KW"/>
</dbReference>
<dbReference type="GO" id="GO:0070403">
    <property type="term" value="F:NAD+ binding"/>
    <property type="evidence" value="ECO:0000250"/>
    <property type="project" value="UniProtKB"/>
</dbReference>
<dbReference type="GO" id="GO:0016705">
    <property type="term" value="F:oxidoreductase activity, acting on paired donors, with incorporation or reduction of molecular oxygen"/>
    <property type="evidence" value="ECO:0007669"/>
    <property type="project" value="InterPro"/>
</dbReference>
<dbReference type="GO" id="GO:0009820">
    <property type="term" value="P:alkaloid metabolic process"/>
    <property type="evidence" value="ECO:0007669"/>
    <property type="project" value="UniProtKB-KW"/>
</dbReference>
<dbReference type="CDD" id="cd11072">
    <property type="entry name" value="CYP71-like"/>
    <property type="match status" value="1"/>
</dbReference>
<dbReference type="FunFam" id="1.10.630.10:FF:000043">
    <property type="entry name" value="Cytochrome P450 99A2"/>
    <property type="match status" value="1"/>
</dbReference>
<dbReference type="Gene3D" id="1.10.630.10">
    <property type="entry name" value="Cytochrome P450"/>
    <property type="match status" value="1"/>
</dbReference>
<dbReference type="InterPro" id="IPR052306">
    <property type="entry name" value="CYP450_71D"/>
</dbReference>
<dbReference type="InterPro" id="IPR001128">
    <property type="entry name" value="Cyt_P450"/>
</dbReference>
<dbReference type="InterPro" id="IPR017972">
    <property type="entry name" value="Cyt_P450_CS"/>
</dbReference>
<dbReference type="InterPro" id="IPR002401">
    <property type="entry name" value="Cyt_P450_E_grp-I"/>
</dbReference>
<dbReference type="InterPro" id="IPR036396">
    <property type="entry name" value="Cyt_P450_sf"/>
</dbReference>
<dbReference type="PANTHER" id="PTHR47953:SF19">
    <property type="entry name" value="OS06G0641600 PROTEIN"/>
    <property type="match status" value="1"/>
</dbReference>
<dbReference type="PANTHER" id="PTHR47953">
    <property type="entry name" value="OS08G0105600 PROTEIN"/>
    <property type="match status" value="1"/>
</dbReference>
<dbReference type="Pfam" id="PF00067">
    <property type="entry name" value="p450"/>
    <property type="match status" value="1"/>
</dbReference>
<dbReference type="PRINTS" id="PR00463">
    <property type="entry name" value="EP450I"/>
</dbReference>
<dbReference type="PRINTS" id="PR00385">
    <property type="entry name" value="P450"/>
</dbReference>
<dbReference type="SUPFAM" id="SSF48264">
    <property type="entry name" value="Cytochrome P450"/>
    <property type="match status" value="1"/>
</dbReference>
<dbReference type="PROSITE" id="PS00086">
    <property type="entry name" value="CYTOCHROME_P450"/>
    <property type="match status" value="1"/>
</dbReference>
<gene>
    <name evidence="7" type="primary">CYP71D1V2</name>
    <name evidence="8" type="synonym">16T3O</name>
    <name evidence="8" type="synonym">CYP71D1</name>
    <name evidence="9" type="synonym">T3O</name>
</gene>
<proteinExistence type="evidence at protein level"/>
<organism evidence="11">
    <name type="scientific">Catharanthus roseus</name>
    <name type="common">Madagascar periwinkle</name>
    <name type="synonym">Vinca rosea</name>
    <dbReference type="NCBI Taxonomy" id="4058"/>
    <lineage>
        <taxon>Eukaryota</taxon>
        <taxon>Viridiplantae</taxon>
        <taxon>Streptophyta</taxon>
        <taxon>Embryophyta</taxon>
        <taxon>Tracheophyta</taxon>
        <taxon>Spermatophyta</taxon>
        <taxon>Magnoliopsida</taxon>
        <taxon>eudicotyledons</taxon>
        <taxon>Gunneridae</taxon>
        <taxon>Pentapetalae</taxon>
        <taxon>asterids</taxon>
        <taxon>lamiids</taxon>
        <taxon>Gentianales</taxon>
        <taxon>Apocynaceae</taxon>
        <taxon>Rauvolfioideae</taxon>
        <taxon>Vinceae</taxon>
        <taxon>Catharanthinae</taxon>
        <taxon>Catharanthus</taxon>
    </lineage>
</organism>